<feature type="chain" id="PRO_1000055242" description="Large ribosomal subunit protein uL6">
    <location>
        <begin position="1"/>
        <end position="186"/>
    </location>
</feature>
<reference key="1">
    <citation type="journal article" date="2008" name="Genome Biol.">
        <title>A genomic analysis of the archaeal system Ignicoccus hospitalis-Nanoarchaeum equitans.</title>
        <authorList>
            <person name="Podar M."/>
            <person name="Anderson I."/>
            <person name="Makarova K.S."/>
            <person name="Elkins J.G."/>
            <person name="Ivanova N."/>
            <person name="Wall M.A."/>
            <person name="Lykidis A."/>
            <person name="Mavromatis K."/>
            <person name="Sun H."/>
            <person name="Hudson M.E."/>
            <person name="Chen W."/>
            <person name="Deciu C."/>
            <person name="Hutchison D."/>
            <person name="Eads J.R."/>
            <person name="Anderson A."/>
            <person name="Fernandes F."/>
            <person name="Szeto E."/>
            <person name="Lapidus A."/>
            <person name="Kyrpides N.C."/>
            <person name="Saier M.H. Jr."/>
            <person name="Richardson P.M."/>
            <person name="Rachel R."/>
            <person name="Huber H."/>
            <person name="Eisen J.A."/>
            <person name="Koonin E.V."/>
            <person name="Keller M."/>
            <person name="Stetter K.O."/>
        </authorList>
    </citation>
    <scope>NUCLEOTIDE SEQUENCE [LARGE SCALE GENOMIC DNA]</scope>
    <source>
        <strain>KIN4/I / DSM 18386 / JCM 14125</strain>
    </source>
</reference>
<sequence length="186" mass="20881">MAKAVWVHALVDVPEGVEVEVEGSKVKVRGPKGELERDFSHAKGIRIRVVEEEGKKQVLVETFFANRKRKALVNTVAAHIKNMITGVTKGWRYKMKIVFSHFPISVKVVGDRVEIHNFIGEKAPRVAKVLPGVTVKVQGRDVIIEGTDIEKVAQTAANIEQATKITEFDRRVFMDGIYIYAREVMS</sequence>
<keyword id="KW-1185">Reference proteome</keyword>
<keyword id="KW-0687">Ribonucleoprotein</keyword>
<keyword id="KW-0689">Ribosomal protein</keyword>
<keyword id="KW-0694">RNA-binding</keyword>
<keyword id="KW-0699">rRNA-binding</keyword>
<dbReference type="EMBL" id="CP000816">
    <property type="protein sequence ID" value="ABU82456.1"/>
    <property type="molecule type" value="Genomic_DNA"/>
</dbReference>
<dbReference type="RefSeq" id="WP_012123420.1">
    <property type="nucleotide sequence ID" value="NC_009776.1"/>
</dbReference>
<dbReference type="SMR" id="A8AC04"/>
<dbReference type="STRING" id="453591.Igni_1280"/>
<dbReference type="GeneID" id="5562690"/>
<dbReference type="KEGG" id="iho:Igni_1280"/>
<dbReference type="eggNOG" id="arCOG04090">
    <property type="taxonomic scope" value="Archaea"/>
</dbReference>
<dbReference type="HOGENOM" id="CLU_065464_0_0_2"/>
<dbReference type="OrthoDB" id="7144at2157"/>
<dbReference type="PhylomeDB" id="A8AC04"/>
<dbReference type="Proteomes" id="UP000000262">
    <property type="component" value="Chromosome"/>
</dbReference>
<dbReference type="GO" id="GO:0022625">
    <property type="term" value="C:cytosolic large ribosomal subunit"/>
    <property type="evidence" value="ECO:0007669"/>
    <property type="project" value="TreeGrafter"/>
</dbReference>
<dbReference type="GO" id="GO:0019843">
    <property type="term" value="F:rRNA binding"/>
    <property type="evidence" value="ECO:0007669"/>
    <property type="project" value="UniProtKB-UniRule"/>
</dbReference>
<dbReference type="GO" id="GO:0003735">
    <property type="term" value="F:structural constituent of ribosome"/>
    <property type="evidence" value="ECO:0007669"/>
    <property type="project" value="InterPro"/>
</dbReference>
<dbReference type="GO" id="GO:0002181">
    <property type="term" value="P:cytoplasmic translation"/>
    <property type="evidence" value="ECO:0007669"/>
    <property type="project" value="TreeGrafter"/>
</dbReference>
<dbReference type="FunFam" id="3.90.930.12:FF:000008">
    <property type="entry name" value="50S ribosomal protein L6"/>
    <property type="match status" value="1"/>
</dbReference>
<dbReference type="FunFam" id="3.90.930.12:FF:000004">
    <property type="entry name" value="60S ribosomal protein L9"/>
    <property type="match status" value="1"/>
</dbReference>
<dbReference type="Gene3D" id="3.90.930.12">
    <property type="entry name" value="Ribosomal protein L6, alpha-beta domain"/>
    <property type="match status" value="2"/>
</dbReference>
<dbReference type="HAMAP" id="MF_01365_A">
    <property type="entry name" value="Ribosomal_uL6_A"/>
    <property type="match status" value="1"/>
</dbReference>
<dbReference type="InterPro" id="IPR000702">
    <property type="entry name" value="Ribosomal_uL6-like"/>
</dbReference>
<dbReference type="InterPro" id="IPR036789">
    <property type="entry name" value="Ribosomal_uL6-like_a/b-dom_sf"/>
</dbReference>
<dbReference type="InterPro" id="IPR020040">
    <property type="entry name" value="Ribosomal_uL6_a/b-dom"/>
</dbReference>
<dbReference type="InterPro" id="IPR019907">
    <property type="entry name" value="Ribosomal_uL6_arc"/>
</dbReference>
<dbReference type="InterPro" id="IPR002359">
    <property type="entry name" value="Ribosomal_uL6_CS2"/>
</dbReference>
<dbReference type="NCBIfam" id="NF004037">
    <property type="entry name" value="PRK05518.1"/>
    <property type="match status" value="1"/>
</dbReference>
<dbReference type="NCBIfam" id="TIGR03653">
    <property type="entry name" value="uL6_arch"/>
    <property type="match status" value="1"/>
</dbReference>
<dbReference type="PANTHER" id="PTHR11655:SF16">
    <property type="entry name" value="60S RIBOSOMAL PROTEIN L9"/>
    <property type="match status" value="1"/>
</dbReference>
<dbReference type="PANTHER" id="PTHR11655">
    <property type="entry name" value="60S/50S RIBOSOMAL PROTEIN L6/L9"/>
    <property type="match status" value="1"/>
</dbReference>
<dbReference type="Pfam" id="PF00347">
    <property type="entry name" value="Ribosomal_L6"/>
    <property type="match status" value="2"/>
</dbReference>
<dbReference type="PIRSF" id="PIRSF002162">
    <property type="entry name" value="Ribosomal_L6"/>
    <property type="match status" value="1"/>
</dbReference>
<dbReference type="SUPFAM" id="SSF56053">
    <property type="entry name" value="Ribosomal protein L6"/>
    <property type="match status" value="2"/>
</dbReference>
<dbReference type="PROSITE" id="PS00700">
    <property type="entry name" value="RIBOSOMAL_L6_2"/>
    <property type="match status" value="1"/>
</dbReference>
<proteinExistence type="inferred from homology"/>
<gene>
    <name evidence="1" type="primary">rpl6</name>
    <name type="ordered locus">Igni_1280</name>
</gene>
<evidence type="ECO:0000255" key="1">
    <source>
        <dbReference type="HAMAP-Rule" id="MF_01365"/>
    </source>
</evidence>
<evidence type="ECO:0000305" key="2"/>
<name>RL6_IGNH4</name>
<protein>
    <recommendedName>
        <fullName evidence="1">Large ribosomal subunit protein uL6</fullName>
    </recommendedName>
    <alternativeName>
        <fullName evidence="2">50S ribosomal protein L6</fullName>
    </alternativeName>
</protein>
<accession>A8AC04</accession>
<comment type="function">
    <text evidence="1">This protein binds to the 23S rRNA, and is important in its secondary structure. It is located near the subunit interface in the base of the L7/L12 stalk, and near the tRNA binding site of the peptidyltransferase center.</text>
</comment>
<comment type="subunit">
    <text evidence="1">Part of the 50S ribosomal subunit.</text>
</comment>
<comment type="similarity">
    <text evidence="1">Belongs to the universal ribosomal protein uL6 family.</text>
</comment>
<organism>
    <name type="scientific">Ignicoccus hospitalis (strain KIN4/I / DSM 18386 / JCM 14125)</name>
    <dbReference type="NCBI Taxonomy" id="453591"/>
    <lineage>
        <taxon>Archaea</taxon>
        <taxon>Thermoproteota</taxon>
        <taxon>Thermoprotei</taxon>
        <taxon>Desulfurococcales</taxon>
        <taxon>Desulfurococcaceae</taxon>
        <taxon>Ignicoccus</taxon>
    </lineage>
</organism>